<accession>A4IZ54</accession>
<feature type="chain" id="PRO_1000013969" description="Glucose-6-phosphate isomerase">
    <location>
        <begin position="1"/>
        <end position="540"/>
    </location>
</feature>
<feature type="active site" description="Proton donor" evidence="1">
    <location>
        <position position="346"/>
    </location>
</feature>
<feature type="active site" evidence="1">
    <location>
        <position position="377"/>
    </location>
</feature>
<feature type="active site" evidence="1">
    <location>
        <position position="505"/>
    </location>
</feature>
<evidence type="ECO:0000255" key="1">
    <source>
        <dbReference type="HAMAP-Rule" id="MF_00473"/>
    </source>
</evidence>
<gene>
    <name evidence="1" type="primary">pgi</name>
    <name type="ordered locus">FTW_1481</name>
</gene>
<comment type="function">
    <text evidence="1">Catalyzes the reversible isomerization of glucose-6-phosphate to fructose-6-phosphate.</text>
</comment>
<comment type="catalytic activity">
    <reaction evidence="1">
        <text>alpha-D-glucose 6-phosphate = beta-D-fructose 6-phosphate</text>
        <dbReference type="Rhea" id="RHEA:11816"/>
        <dbReference type="ChEBI" id="CHEBI:57634"/>
        <dbReference type="ChEBI" id="CHEBI:58225"/>
        <dbReference type="EC" id="5.3.1.9"/>
    </reaction>
</comment>
<comment type="pathway">
    <text evidence="1">Carbohydrate biosynthesis; gluconeogenesis.</text>
</comment>
<comment type="pathway">
    <text evidence="1">Carbohydrate degradation; glycolysis; D-glyceraldehyde 3-phosphate and glycerone phosphate from D-glucose: step 2/4.</text>
</comment>
<comment type="subcellular location">
    <subcellularLocation>
        <location evidence="1">Cytoplasm</location>
    </subcellularLocation>
</comment>
<comment type="similarity">
    <text evidence="1">Belongs to the GPI family.</text>
</comment>
<protein>
    <recommendedName>
        <fullName evidence="1">Glucose-6-phosphate isomerase</fullName>
        <shortName evidence="1">GPI</shortName>
        <ecNumber evidence="1">5.3.1.9</ecNumber>
    </recommendedName>
    <alternativeName>
        <fullName evidence="1">Phosphoglucose isomerase</fullName>
        <shortName evidence="1">PGI</shortName>
    </alternativeName>
    <alternativeName>
        <fullName evidence="1">Phosphohexose isomerase</fullName>
        <shortName evidence="1">PHI</shortName>
    </alternativeName>
</protein>
<proteinExistence type="inferred from homology"/>
<reference key="1">
    <citation type="journal article" date="2007" name="PLoS ONE">
        <title>Complete genomic characterization of a pathogenic A.II strain of Francisella tularensis subspecies tularensis.</title>
        <authorList>
            <person name="Beckstrom-Sternberg S.M."/>
            <person name="Auerbach R.K."/>
            <person name="Godbole S."/>
            <person name="Pearson J.V."/>
            <person name="Beckstrom-Sternberg J.S."/>
            <person name="Deng Z."/>
            <person name="Munk C."/>
            <person name="Kubota K."/>
            <person name="Zhou Y."/>
            <person name="Bruce D."/>
            <person name="Noronha J."/>
            <person name="Scheuermann R.H."/>
            <person name="Wang A."/>
            <person name="Wei X."/>
            <person name="Wang J."/>
            <person name="Hao J."/>
            <person name="Wagner D.M."/>
            <person name="Brettin T.S."/>
            <person name="Brown N."/>
            <person name="Gilna P."/>
            <person name="Keim P.S."/>
        </authorList>
    </citation>
    <scope>NUCLEOTIDE SEQUENCE [LARGE SCALE GENOMIC DNA]</scope>
    <source>
        <strain>WY96-3418</strain>
    </source>
</reference>
<organism>
    <name type="scientific">Francisella tularensis subsp. tularensis (strain WY96-3418)</name>
    <dbReference type="NCBI Taxonomy" id="418136"/>
    <lineage>
        <taxon>Bacteria</taxon>
        <taxon>Pseudomonadati</taxon>
        <taxon>Pseudomonadota</taxon>
        <taxon>Gammaproteobacteria</taxon>
        <taxon>Thiotrichales</taxon>
        <taxon>Francisellaceae</taxon>
        <taxon>Francisella</taxon>
    </lineage>
</organism>
<name>G6PI_FRATW</name>
<sequence>MLFCDDSKKYLKEQNINLKNEFDKDDKRVEKFSLKHQNIYFDYSKNLINDYILKSLLESAEKSSLKDKIKQMFNGAKINSTEHRAVLHTALRDLSSTPLIVDGQDIRQEVTKEKQRVKELVEKVVSGRWRGFSGKKITDIVNIGIGGSDLGPKMVVRALQPYHCTDLKVHFVSNVDADSLLQALHVVDPETTLFIIASKSFSTEETLLNSISAREWLLDHYEDEKAVANHFVAISSKLDKVKEFGIDLEHCYKMWDWVGGRYSLWSSIGMSIAFAIGYDNFEKLLAGAYSVDKHFKETEFSKNIPVIMALLASYYSCTYNSQSQALLPYDERLCYFVDYLQQADMESNGKSVNIAGETVNYQTGVVLWGGVGTNGQHAFHQLLHQGNIFIPVDFIAIATSHHNYDNHQQALLANCFAQSQALMFGQSYDMVYNELLKSGLNETQAKELAAHKVIPGNRPSTTILLDELSPYSLGVLIALYEHKIFVQGVLWDINSYDQWGVELGKKLGKNILKAMNDDSSDEYQNLDDSTRQLIAKVKNK</sequence>
<dbReference type="EC" id="5.3.1.9" evidence="1"/>
<dbReference type="EMBL" id="CP000608">
    <property type="protein sequence ID" value="ABO47205.1"/>
    <property type="molecule type" value="Genomic_DNA"/>
</dbReference>
<dbReference type="RefSeq" id="WP_003026761.1">
    <property type="nucleotide sequence ID" value="NC_009257.1"/>
</dbReference>
<dbReference type="SMR" id="A4IZ54"/>
<dbReference type="KEGG" id="ftw:FTW_1481"/>
<dbReference type="HOGENOM" id="CLU_017947_3_1_6"/>
<dbReference type="UniPathway" id="UPA00109">
    <property type="reaction ID" value="UER00181"/>
</dbReference>
<dbReference type="UniPathway" id="UPA00138"/>
<dbReference type="GO" id="GO:0005829">
    <property type="term" value="C:cytosol"/>
    <property type="evidence" value="ECO:0007669"/>
    <property type="project" value="TreeGrafter"/>
</dbReference>
<dbReference type="GO" id="GO:0097367">
    <property type="term" value="F:carbohydrate derivative binding"/>
    <property type="evidence" value="ECO:0007669"/>
    <property type="project" value="InterPro"/>
</dbReference>
<dbReference type="GO" id="GO:0004347">
    <property type="term" value="F:glucose-6-phosphate isomerase activity"/>
    <property type="evidence" value="ECO:0007669"/>
    <property type="project" value="UniProtKB-UniRule"/>
</dbReference>
<dbReference type="GO" id="GO:0048029">
    <property type="term" value="F:monosaccharide binding"/>
    <property type="evidence" value="ECO:0007669"/>
    <property type="project" value="TreeGrafter"/>
</dbReference>
<dbReference type="GO" id="GO:0006094">
    <property type="term" value="P:gluconeogenesis"/>
    <property type="evidence" value="ECO:0007669"/>
    <property type="project" value="UniProtKB-UniRule"/>
</dbReference>
<dbReference type="GO" id="GO:0051156">
    <property type="term" value="P:glucose 6-phosphate metabolic process"/>
    <property type="evidence" value="ECO:0007669"/>
    <property type="project" value="TreeGrafter"/>
</dbReference>
<dbReference type="GO" id="GO:0006096">
    <property type="term" value="P:glycolytic process"/>
    <property type="evidence" value="ECO:0007669"/>
    <property type="project" value="UniProtKB-UniRule"/>
</dbReference>
<dbReference type="CDD" id="cd05015">
    <property type="entry name" value="SIS_PGI_1"/>
    <property type="match status" value="1"/>
</dbReference>
<dbReference type="CDD" id="cd05016">
    <property type="entry name" value="SIS_PGI_2"/>
    <property type="match status" value="1"/>
</dbReference>
<dbReference type="Gene3D" id="1.10.1390.10">
    <property type="match status" value="1"/>
</dbReference>
<dbReference type="Gene3D" id="3.40.50.10490">
    <property type="entry name" value="Glucose-6-phosphate isomerase like protein, domain 1"/>
    <property type="match status" value="2"/>
</dbReference>
<dbReference type="HAMAP" id="MF_00473">
    <property type="entry name" value="G6P_isomerase"/>
    <property type="match status" value="1"/>
</dbReference>
<dbReference type="InterPro" id="IPR001672">
    <property type="entry name" value="G6P_Isomerase"/>
</dbReference>
<dbReference type="InterPro" id="IPR023096">
    <property type="entry name" value="G6P_Isomerase_C"/>
</dbReference>
<dbReference type="InterPro" id="IPR018189">
    <property type="entry name" value="Phosphoglucose_isomerase_CS"/>
</dbReference>
<dbReference type="InterPro" id="IPR046348">
    <property type="entry name" value="SIS_dom_sf"/>
</dbReference>
<dbReference type="InterPro" id="IPR035476">
    <property type="entry name" value="SIS_PGI_1"/>
</dbReference>
<dbReference type="InterPro" id="IPR035482">
    <property type="entry name" value="SIS_PGI_2"/>
</dbReference>
<dbReference type="NCBIfam" id="NF001211">
    <property type="entry name" value="PRK00179.1"/>
    <property type="match status" value="1"/>
</dbReference>
<dbReference type="PANTHER" id="PTHR11469">
    <property type="entry name" value="GLUCOSE-6-PHOSPHATE ISOMERASE"/>
    <property type="match status" value="1"/>
</dbReference>
<dbReference type="PANTHER" id="PTHR11469:SF1">
    <property type="entry name" value="GLUCOSE-6-PHOSPHATE ISOMERASE"/>
    <property type="match status" value="1"/>
</dbReference>
<dbReference type="Pfam" id="PF00342">
    <property type="entry name" value="PGI"/>
    <property type="match status" value="1"/>
</dbReference>
<dbReference type="PRINTS" id="PR00662">
    <property type="entry name" value="G6PISOMERASE"/>
</dbReference>
<dbReference type="SUPFAM" id="SSF53697">
    <property type="entry name" value="SIS domain"/>
    <property type="match status" value="1"/>
</dbReference>
<dbReference type="PROSITE" id="PS00765">
    <property type="entry name" value="P_GLUCOSE_ISOMERASE_1"/>
    <property type="match status" value="1"/>
</dbReference>
<dbReference type="PROSITE" id="PS00174">
    <property type="entry name" value="P_GLUCOSE_ISOMERASE_2"/>
    <property type="match status" value="1"/>
</dbReference>
<dbReference type="PROSITE" id="PS51463">
    <property type="entry name" value="P_GLUCOSE_ISOMERASE_3"/>
    <property type="match status" value="1"/>
</dbReference>
<keyword id="KW-0963">Cytoplasm</keyword>
<keyword id="KW-0312">Gluconeogenesis</keyword>
<keyword id="KW-0324">Glycolysis</keyword>
<keyword id="KW-0413">Isomerase</keyword>